<evidence type="ECO:0000255" key="1">
    <source>
        <dbReference type="HAMAP-Rule" id="MF_00071"/>
    </source>
</evidence>
<proteinExistence type="inferred from homology"/>
<gene>
    <name evidence="1" type="primary">lepA</name>
    <name type="ordered locus">Maqu_2248</name>
</gene>
<name>LEPA_MARN8</name>
<keyword id="KW-0997">Cell inner membrane</keyword>
<keyword id="KW-1003">Cell membrane</keyword>
<keyword id="KW-0342">GTP-binding</keyword>
<keyword id="KW-0378">Hydrolase</keyword>
<keyword id="KW-0472">Membrane</keyword>
<keyword id="KW-0547">Nucleotide-binding</keyword>
<keyword id="KW-0648">Protein biosynthesis</keyword>
<dbReference type="EC" id="3.6.5.n1" evidence="1"/>
<dbReference type="EMBL" id="CP000514">
    <property type="protein sequence ID" value="ABM19327.1"/>
    <property type="molecule type" value="Genomic_DNA"/>
</dbReference>
<dbReference type="RefSeq" id="WP_011785715.1">
    <property type="nucleotide sequence ID" value="NC_008740.1"/>
</dbReference>
<dbReference type="SMR" id="A1U2V8"/>
<dbReference type="STRING" id="351348.Maqu_2248"/>
<dbReference type="GeneID" id="31820471"/>
<dbReference type="KEGG" id="maq:Maqu_2248"/>
<dbReference type="eggNOG" id="COG0481">
    <property type="taxonomic scope" value="Bacteria"/>
</dbReference>
<dbReference type="HOGENOM" id="CLU_009995_3_3_6"/>
<dbReference type="OrthoDB" id="9804431at2"/>
<dbReference type="Proteomes" id="UP000000998">
    <property type="component" value="Chromosome"/>
</dbReference>
<dbReference type="GO" id="GO:0005886">
    <property type="term" value="C:plasma membrane"/>
    <property type="evidence" value="ECO:0007669"/>
    <property type="project" value="UniProtKB-SubCell"/>
</dbReference>
<dbReference type="GO" id="GO:0005525">
    <property type="term" value="F:GTP binding"/>
    <property type="evidence" value="ECO:0007669"/>
    <property type="project" value="UniProtKB-UniRule"/>
</dbReference>
<dbReference type="GO" id="GO:0003924">
    <property type="term" value="F:GTPase activity"/>
    <property type="evidence" value="ECO:0007669"/>
    <property type="project" value="UniProtKB-UniRule"/>
</dbReference>
<dbReference type="GO" id="GO:0097216">
    <property type="term" value="F:guanosine tetraphosphate binding"/>
    <property type="evidence" value="ECO:0007669"/>
    <property type="project" value="UniProtKB-ARBA"/>
</dbReference>
<dbReference type="GO" id="GO:0043022">
    <property type="term" value="F:ribosome binding"/>
    <property type="evidence" value="ECO:0007669"/>
    <property type="project" value="UniProtKB-UniRule"/>
</dbReference>
<dbReference type="GO" id="GO:0003746">
    <property type="term" value="F:translation elongation factor activity"/>
    <property type="evidence" value="ECO:0007669"/>
    <property type="project" value="UniProtKB-UniRule"/>
</dbReference>
<dbReference type="GO" id="GO:0045727">
    <property type="term" value="P:positive regulation of translation"/>
    <property type="evidence" value="ECO:0007669"/>
    <property type="project" value="UniProtKB-UniRule"/>
</dbReference>
<dbReference type="CDD" id="cd03699">
    <property type="entry name" value="EF4_II"/>
    <property type="match status" value="1"/>
</dbReference>
<dbReference type="CDD" id="cd16260">
    <property type="entry name" value="EF4_III"/>
    <property type="match status" value="1"/>
</dbReference>
<dbReference type="CDD" id="cd01890">
    <property type="entry name" value="LepA"/>
    <property type="match status" value="1"/>
</dbReference>
<dbReference type="CDD" id="cd03709">
    <property type="entry name" value="lepA_C"/>
    <property type="match status" value="1"/>
</dbReference>
<dbReference type="FunFam" id="3.40.50.300:FF:000078">
    <property type="entry name" value="Elongation factor 4"/>
    <property type="match status" value="1"/>
</dbReference>
<dbReference type="FunFam" id="2.40.30.10:FF:000015">
    <property type="entry name" value="Translation factor GUF1, mitochondrial"/>
    <property type="match status" value="1"/>
</dbReference>
<dbReference type="FunFam" id="3.30.70.240:FF:000007">
    <property type="entry name" value="Translation factor GUF1, mitochondrial"/>
    <property type="match status" value="1"/>
</dbReference>
<dbReference type="FunFam" id="3.30.70.2570:FF:000001">
    <property type="entry name" value="Translation factor GUF1, mitochondrial"/>
    <property type="match status" value="1"/>
</dbReference>
<dbReference type="FunFam" id="3.30.70.870:FF:000004">
    <property type="entry name" value="Translation factor GUF1, mitochondrial"/>
    <property type="match status" value="1"/>
</dbReference>
<dbReference type="Gene3D" id="3.30.70.240">
    <property type="match status" value="1"/>
</dbReference>
<dbReference type="Gene3D" id="3.30.70.2570">
    <property type="entry name" value="Elongation factor 4, C-terminal domain"/>
    <property type="match status" value="1"/>
</dbReference>
<dbReference type="Gene3D" id="3.30.70.870">
    <property type="entry name" value="Elongation Factor G (Translational Gtpase), domain 3"/>
    <property type="match status" value="1"/>
</dbReference>
<dbReference type="Gene3D" id="3.40.50.300">
    <property type="entry name" value="P-loop containing nucleotide triphosphate hydrolases"/>
    <property type="match status" value="1"/>
</dbReference>
<dbReference type="Gene3D" id="2.40.30.10">
    <property type="entry name" value="Translation factors"/>
    <property type="match status" value="1"/>
</dbReference>
<dbReference type="HAMAP" id="MF_00071">
    <property type="entry name" value="LepA"/>
    <property type="match status" value="1"/>
</dbReference>
<dbReference type="InterPro" id="IPR006297">
    <property type="entry name" value="EF-4"/>
</dbReference>
<dbReference type="InterPro" id="IPR035647">
    <property type="entry name" value="EFG_III/V"/>
</dbReference>
<dbReference type="InterPro" id="IPR000640">
    <property type="entry name" value="EFG_V-like"/>
</dbReference>
<dbReference type="InterPro" id="IPR004161">
    <property type="entry name" value="EFTu-like_2"/>
</dbReference>
<dbReference type="InterPro" id="IPR031157">
    <property type="entry name" value="G_TR_CS"/>
</dbReference>
<dbReference type="InterPro" id="IPR038363">
    <property type="entry name" value="LepA_C_sf"/>
</dbReference>
<dbReference type="InterPro" id="IPR013842">
    <property type="entry name" value="LepA_CTD"/>
</dbReference>
<dbReference type="InterPro" id="IPR035654">
    <property type="entry name" value="LepA_IV"/>
</dbReference>
<dbReference type="InterPro" id="IPR027417">
    <property type="entry name" value="P-loop_NTPase"/>
</dbReference>
<dbReference type="InterPro" id="IPR005225">
    <property type="entry name" value="Small_GTP-bd"/>
</dbReference>
<dbReference type="InterPro" id="IPR000795">
    <property type="entry name" value="T_Tr_GTP-bd_dom"/>
</dbReference>
<dbReference type="NCBIfam" id="TIGR01393">
    <property type="entry name" value="lepA"/>
    <property type="match status" value="1"/>
</dbReference>
<dbReference type="NCBIfam" id="TIGR00231">
    <property type="entry name" value="small_GTP"/>
    <property type="match status" value="1"/>
</dbReference>
<dbReference type="PANTHER" id="PTHR43512:SF4">
    <property type="entry name" value="TRANSLATION FACTOR GUF1 HOMOLOG, CHLOROPLASTIC"/>
    <property type="match status" value="1"/>
</dbReference>
<dbReference type="PANTHER" id="PTHR43512">
    <property type="entry name" value="TRANSLATION FACTOR GUF1-RELATED"/>
    <property type="match status" value="1"/>
</dbReference>
<dbReference type="Pfam" id="PF00679">
    <property type="entry name" value="EFG_C"/>
    <property type="match status" value="1"/>
</dbReference>
<dbReference type="Pfam" id="PF00009">
    <property type="entry name" value="GTP_EFTU"/>
    <property type="match status" value="1"/>
</dbReference>
<dbReference type="Pfam" id="PF03144">
    <property type="entry name" value="GTP_EFTU_D2"/>
    <property type="match status" value="1"/>
</dbReference>
<dbReference type="Pfam" id="PF06421">
    <property type="entry name" value="LepA_C"/>
    <property type="match status" value="1"/>
</dbReference>
<dbReference type="PRINTS" id="PR00315">
    <property type="entry name" value="ELONGATNFCT"/>
</dbReference>
<dbReference type="SUPFAM" id="SSF54980">
    <property type="entry name" value="EF-G C-terminal domain-like"/>
    <property type="match status" value="2"/>
</dbReference>
<dbReference type="SUPFAM" id="SSF52540">
    <property type="entry name" value="P-loop containing nucleoside triphosphate hydrolases"/>
    <property type="match status" value="1"/>
</dbReference>
<dbReference type="PROSITE" id="PS00301">
    <property type="entry name" value="G_TR_1"/>
    <property type="match status" value="1"/>
</dbReference>
<dbReference type="PROSITE" id="PS51722">
    <property type="entry name" value="G_TR_2"/>
    <property type="match status" value="1"/>
</dbReference>
<sequence length="600" mass="66663">MTELSRIRNFSIIAHIDHGKSTLADRFIQICGGLTDREMAEQVLDSMDLERERGITIKAQSVTLNYKAKDGETYKLNFIDTPGHVDFSYEVSRSLYACEGALLVVDAGQGVEAQSVANCYTAIEQGLEVVPVLNKMDLPQAEPERVAAEIEDIIGIDASDAVRCSAKSGLGVEDVLEDLIKKIPPPKGDRSAPLQALIIDSWFDNYLGVVSLVRVTEGVLRKGDKIVIKSTKKAWNADKVGVFNPKPTDTDVLEAGDVGFVVAGIKDIHGAPVGDTIVHQKFAEETPMLPGFKKVKPQVYAGLFPVSADDYDDFRDALEKLTLNDASLFFEPENSDALGFGFRCGFLGMLHMEIIQERLEREYDLDLITTAPTVIYEVVTKQGETLSVDNPSRLPDIGSIEEMREPIVEANILVPQEHLGNVIALCEEKRGVQKNMHFMSTQVQLTYELPMAEVVMDFFDRIKSASRGFASLDYHFVRFQSANLVRLDVLINGDRVDALALIVHRDLSHRKGRQLIEKMKELIPRQMFDIAIQAAIGTQVVSRVTVKALRKNVTAKCYGGDVSRKKKLLQKQKEGKKRMKQLGNVEVPQEAFLAVLKVDN</sequence>
<reference key="1">
    <citation type="journal article" date="2011" name="Appl. Environ. Microbiol.">
        <title>Genomic potential of Marinobacter aquaeolei, a biogeochemical 'opportunitroph'.</title>
        <authorList>
            <person name="Singer E."/>
            <person name="Webb E.A."/>
            <person name="Nelson W.C."/>
            <person name="Heidelberg J.F."/>
            <person name="Ivanova N."/>
            <person name="Pati A."/>
            <person name="Edwards K.J."/>
        </authorList>
    </citation>
    <scope>NUCLEOTIDE SEQUENCE [LARGE SCALE GENOMIC DNA]</scope>
    <source>
        <strain>ATCC 700491 / DSM 11845 / VT8</strain>
    </source>
</reference>
<protein>
    <recommendedName>
        <fullName evidence="1">Elongation factor 4</fullName>
        <shortName evidence="1">EF-4</shortName>
        <ecNumber evidence="1">3.6.5.n1</ecNumber>
    </recommendedName>
    <alternativeName>
        <fullName evidence="1">Ribosomal back-translocase LepA</fullName>
    </alternativeName>
</protein>
<comment type="function">
    <text evidence="1">Required for accurate and efficient protein synthesis under certain stress conditions. May act as a fidelity factor of the translation reaction, by catalyzing a one-codon backward translocation of tRNAs on improperly translocated ribosomes. Back-translocation proceeds from a post-translocation (POST) complex to a pre-translocation (PRE) complex, thus giving elongation factor G a second chance to translocate the tRNAs correctly. Binds to ribosomes in a GTP-dependent manner.</text>
</comment>
<comment type="catalytic activity">
    <reaction evidence="1">
        <text>GTP + H2O = GDP + phosphate + H(+)</text>
        <dbReference type="Rhea" id="RHEA:19669"/>
        <dbReference type="ChEBI" id="CHEBI:15377"/>
        <dbReference type="ChEBI" id="CHEBI:15378"/>
        <dbReference type="ChEBI" id="CHEBI:37565"/>
        <dbReference type="ChEBI" id="CHEBI:43474"/>
        <dbReference type="ChEBI" id="CHEBI:58189"/>
        <dbReference type="EC" id="3.6.5.n1"/>
    </reaction>
</comment>
<comment type="subcellular location">
    <subcellularLocation>
        <location evidence="1">Cell inner membrane</location>
        <topology evidence="1">Peripheral membrane protein</topology>
        <orientation evidence="1">Cytoplasmic side</orientation>
    </subcellularLocation>
</comment>
<comment type="similarity">
    <text evidence="1">Belongs to the TRAFAC class translation factor GTPase superfamily. Classic translation factor GTPase family. LepA subfamily.</text>
</comment>
<organism>
    <name type="scientific">Marinobacter nauticus (strain ATCC 700491 / DSM 11845 / VT8)</name>
    <name type="common">Marinobacter aquaeolei</name>
    <dbReference type="NCBI Taxonomy" id="351348"/>
    <lineage>
        <taxon>Bacteria</taxon>
        <taxon>Pseudomonadati</taxon>
        <taxon>Pseudomonadota</taxon>
        <taxon>Gammaproteobacteria</taxon>
        <taxon>Pseudomonadales</taxon>
        <taxon>Marinobacteraceae</taxon>
        <taxon>Marinobacter</taxon>
    </lineage>
</organism>
<feature type="chain" id="PRO_1000032018" description="Elongation factor 4">
    <location>
        <begin position="1"/>
        <end position="600"/>
    </location>
</feature>
<feature type="domain" description="tr-type G">
    <location>
        <begin position="5"/>
        <end position="187"/>
    </location>
</feature>
<feature type="binding site" evidence="1">
    <location>
        <begin position="17"/>
        <end position="22"/>
    </location>
    <ligand>
        <name>GTP</name>
        <dbReference type="ChEBI" id="CHEBI:37565"/>
    </ligand>
</feature>
<feature type="binding site" evidence="1">
    <location>
        <begin position="134"/>
        <end position="137"/>
    </location>
    <ligand>
        <name>GTP</name>
        <dbReference type="ChEBI" id="CHEBI:37565"/>
    </ligand>
</feature>
<accession>A1U2V8</accession>